<accession>P80704</accession>
<comment type="catalytic activity">
    <reaction>
        <text>an aldehyde + a quinone + H2O = a quinol + a carboxylate + H(+)</text>
        <dbReference type="Rhea" id="RHEA:13881"/>
        <dbReference type="ChEBI" id="CHEBI:15377"/>
        <dbReference type="ChEBI" id="CHEBI:15378"/>
        <dbReference type="ChEBI" id="CHEBI:17478"/>
        <dbReference type="ChEBI" id="CHEBI:24646"/>
        <dbReference type="ChEBI" id="CHEBI:29067"/>
        <dbReference type="ChEBI" id="CHEBI:132124"/>
        <dbReference type="EC" id="1.2.5.2"/>
    </reaction>
</comment>
<comment type="cofactor">
    <cofactor evidence="1">
        <name>FAD</name>
        <dbReference type="ChEBI" id="CHEBI:57692"/>
    </cofactor>
    <text evidence="1">Binds 1 FAD per subunit.</text>
</comment>
<comment type="subunit">
    <text>Heterotrimer composed of an alpha, a beta and a gamma chain.</text>
</comment>
<feature type="chain" id="PRO_0000063246" description="Aldehyde dehydrogenase beta chain">
    <location>
        <begin position="1"/>
        <end position="19" status="greater than"/>
    </location>
</feature>
<feature type="non-terminal residue">
    <location>
        <position position="19"/>
    </location>
</feature>
<organism>
    <name type="scientific">Comamonas testosteroni</name>
    <name type="common">Pseudomonas testosteroni</name>
    <dbReference type="NCBI Taxonomy" id="285"/>
    <lineage>
        <taxon>Bacteria</taxon>
        <taxon>Pseudomonadati</taxon>
        <taxon>Pseudomonadota</taxon>
        <taxon>Betaproteobacteria</taxon>
        <taxon>Burkholderiales</taxon>
        <taxon>Comamonadaceae</taxon>
        <taxon>Comamonas</taxon>
    </lineage>
</organism>
<dbReference type="EC" id="1.2.5.2"/>
<dbReference type="GO" id="GO:0047113">
    <property type="term" value="F:aldehyde dehydrogenase (quinone) activity"/>
    <property type="evidence" value="ECO:0007669"/>
    <property type="project" value="UniProtKB-EC"/>
</dbReference>
<protein>
    <recommendedName>
        <fullName>Aldehyde dehydrogenase beta chain</fullName>
        <shortName>ALDH</shortName>
        <ecNumber>1.2.5.2</ecNumber>
    </recommendedName>
</protein>
<reference key="1">
    <citation type="submission" date="1996-07" db="UniProtKB">
        <authorList>
            <person name="Luykx D.M.A.M."/>
            <person name="Kim S.W."/>
            <person name="de Vries S."/>
            <person name="Duine J.A."/>
        </authorList>
    </citation>
    <scope>PROTEIN SEQUENCE</scope>
    <source>
        <strain>ATCC 15667 / CCUG 14479 / IAM 12408 / JCM 13048 / LMG 7106 / NCIMB 9682 / 2168</strain>
    </source>
</reference>
<keyword id="KW-0903">Direct protein sequencing</keyword>
<keyword id="KW-0274">FAD</keyword>
<keyword id="KW-0285">Flavoprotein</keyword>
<keyword id="KW-0560">Oxidoreductase</keyword>
<evidence type="ECO:0000250" key="1"/>
<proteinExistence type="evidence at protein level"/>
<sequence>MYAFSYSTPRTLDEVSAAS</sequence>
<name>DHAB_COMTE</name>